<sequence>MPPKGWRKDAQGNYPTTSYIKEQENITIQDLLFPKSTIVNLAREVPQQSGKKLLINKDASLALQRGATVFVNHLLLFAREIAKSQDKKSCSVDDVLSALDHIGHSALKGPVRDKLDEYQAAVEQRKKEKLDSGEVDADGDIDMGEDKENVPVEKVKEHDEIEEQGDALQDVEESSEKKQKTESQDVETRVQNLEQT</sequence>
<proteinExistence type="evidence at protein level"/>
<organism>
    <name type="scientific">Saccharomyces cerevisiae (strain ATCC 204508 / S288c)</name>
    <name type="common">Baker's yeast</name>
    <dbReference type="NCBI Taxonomy" id="559292"/>
    <lineage>
        <taxon>Eukaryota</taxon>
        <taxon>Fungi</taxon>
        <taxon>Dikarya</taxon>
        <taxon>Ascomycota</taxon>
        <taxon>Saccharomycotina</taxon>
        <taxon>Saccharomycetes</taxon>
        <taxon>Saccharomycetales</taxon>
        <taxon>Saccharomycetaceae</taxon>
        <taxon>Saccharomyces</taxon>
    </lineage>
</organism>
<comment type="function">
    <text evidence="2 3 4 5 6 8">As accessory component of the DNA polymerase epsilon (DNA polymerase II) participates in chromosomal DNA replication. It is required during synthesis of the leading and lagging DNA strands at the replication fork and binds at/or near replication origins and moves along DNA with the replication fork. It has 3'-5' proofreading exonuclease activity that correct errors arising during DNA replication. It is also involved in DNA synthesis during DNA repair. Also functions as a component of the ISW2 complex, which acts in remodeling the chromatin by catalyzing an ATP-dependent alteration in the structure of nucleosomal DNA. The ISW2 complex is involved in coordinating transcriptional repression and in inheritance of telomeric silencing. It is involved in repression of MAT a-specific genes, INO1, and early meiotic genes during mitotic growth dependent upon transcription factor UME6 and in a parallel pathway to the RPD3-SIN3 histone deacetylase complex.</text>
</comment>
<comment type="subunit">
    <text evidence="2 8 9">DNA polymerase epsilon is a heterotetramer consisting of POL2, DPB2, DPB3 and DPB4. Component of the ISW2 complex, which at least consists of ISW2, ITC1, DLS1 and DPB4.</text>
</comment>
<comment type="interaction">
    <interactant intactId="EBI-29938">
        <id>Q04603</id>
    </interactant>
    <interactant intactId="EBI-25910">
        <id>P40366</id>
        <label>DLS1</label>
    </interactant>
    <organismsDiffer>false</organismsDiffer>
    <experiments>4</experiments>
</comment>
<comment type="interaction">
    <interactant intactId="EBI-29938">
        <id>Q04603</id>
    </interactant>
    <interactant intactId="EBI-6076">
        <id>P27344</id>
        <label>DPB3</label>
    </interactant>
    <organismsDiffer>false</organismsDiffer>
    <experiments>3</experiments>
</comment>
<comment type="subcellular location">
    <subcellularLocation>
        <location evidence="2">Nucleus</location>
    </subcellularLocation>
</comment>
<comment type="miscellaneous">
    <text>In eukaryotes there are five DNA polymerases: alpha, beta, gamma, delta, and epsilon which are responsible for different reactions of DNA synthesis.</text>
</comment>
<comment type="miscellaneous">
    <text evidence="7">Present with 2100 molecules/cell in log phase SD medium.</text>
</comment>
<gene>
    <name type="primary">DPB4</name>
    <name type="ordered locus">YDR121W</name>
</gene>
<protein>
    <recommendedName>
        <fullName>DNA polymerase epsilon subunit D</fullName>
    </recommendedName>
    <alternativeName>
        <fullName>DNA polymerase II subunit D</fullName>
    </alternativeName>
</protein>
<evidence type="ECO:0000256" key="1">
    <source>
        <dbReference type="SAM" id="MobiDB-lite"/>
    </source>
</evidence>
<evidence type="ECO:0000269" key="2">
    <source>
    </source>
</evidence>
<evidence type="ECO:0000269" key="3">
    <source>
    </source>
</evidence>
<evidence type="ECO:0000269" key="4">
    <source>
    </source>
</evidence>
<evidence type="ECO:0000269" key="5">
    <source>
    </source>
</evidence>
<evidence type="ECO:0000269" key="6">
    <source>
    </source>
</evidence>
<evidence type="ECO:0000269" key="7">
    <source>
    </source>
</evidence>
<evidence type="ECO:0000269" key="8">
    <source>
    </source>
</evidence>
<evidence type="ECO:0000269" key="9">
    <source>
    </source>
</evidence>
<evidence type="ECO:0007744" key="10">
    <source>
    </source>
</evidence>
<evidence type="ECO:0007829" key="11">
    <source>
        <dbReference type="PDB" id="6WJV"/>
    </source>
</evidence>
<feature type="chain" id="PRO_0000191754" description="DNA polymerase epsilon subunit D">
    <location>
        <begin position="1"/>
        <end position="196"/>
    </location>
</feature>
<feature type="region of interest" description="Disordered" evidence="1">
    <location>
        <begin position="125"/>
        <end position="196"/>
    </location>
</feature>
<feature type="compositionally biased region" description="Acidic residues" evidence="1">
    <location>
        <begin position="133"/>
        <end position="143"/>
    </location>
</feature>
<feature type="compositionally biased region" description="Basic and acidic residues" evidence="1">
    <location>
        <begin position="144"/>
        <end position="159"/>
    </location>
</feature>
<feature type="compositionally biased region" description="Acidic residues" evidence="1">
    <location>
        <begin position="160"/>
        <end position="173"/>
    </location>
</feature>
<feature type="compositionally biased region" description="Basic and acidic residues" evidence="1">
    <location>
        <begin position="174"/>
        <end position="188"/>
    </location>
</feature>
<feature type="modified residue" description="Phosphoserine; by ATM or ATR" evidence="10">
    <location>
        <position position="183"/>
    </location>
</feature>
<feature type="helix" evidence="11">
    <location>
        <begin position="36"/>
        <end position="40"/>
    </location>
</feature>
<feature type="strand" evidence="11">
    <location>
        <begin position="47"/>
        <end position="49"/>
    </location>
</feature>
<feature type="helix" evidence="11">
    <location>
        <begin position="57"/>
        <end position="82"/>
    </location>
</feature>
<feature type="turn" evidence="11">
    <location>
        <begin position="83"/>
        <end position="86"/>
    </location>
</feature>
<feature type="helix" evidence="11">
    <location>
        <begin position="92"/>
        <end position="95"/>
    </location>
</feature>
<feature type="turn" evidence="11">
    <location>
        <begin position="99"/>
        <end position="103"/>
    </location>
</feature>
<feature type="helix" evidence="11">
    <location>
        <begin position="105"/>
        <end position="121"/>
    </location>
</feature>
<dbReference type="EMBL" id="Z48758">
    <property type="protein sequence ID" value="CAA88674.1"/>
    <property type="molecule type" value="Genomic_DNA"/>
</dbReference>
<dbReference type="EMBL" id="AY557673">
    <property type="protein sequence ID" value="AAS55999.1"/>
    <property type="molecule type" value="Genomic_DNA"/>
</dbReference>
<dbReference type="EMBL" id="BK006938">
    <property type="protein sequence ID" value="DAA11967.1"/>
    <property type="molecule type" value="Genomic_DNA"/>
</dbReference>
<dbReference type="PIR" id="S52686">
    <property type="entry name" value="S52686"/>
</dbReference>
<dbReference type="RefSeq" id="NP_010406.3">
    <property type="nucleotide sequence ID" value="NM_001180429.3"/>
</dbReference>
<dbReference type="PDB" id="6WJV">
    <property type="method" value="EM"/>
    <property type="resolution" value="3.50 A"/>
    <property type="chains" value="4=1-196"/>
</dbReference>
<dbReference type="PDBsum" id="6WJV"/>
<dbReference type="EMDB" id="EMD-21701"/>
<dbReference type="SMR" id="Q04603"/>
<dbReference type="BioGRID" id="32177">
    <property type="interactions" value="161"/>
</dbReference>
<dbReference type="ComplexPortal" id="CPX-2110">
    <property type="entry name" value="DNA polymerase epsilon complex"/>
</dbReference>
<dbReference type="ComplexPortal" id="CPX-728">
    <property type="entry name" value="ISW2 chromatin remodeling complex"/>
</dbReference>
<dbReference type="DIP" id="DIP-4621N"/>
<dbReference type="FunCoup" id="Q04603">
    <property type="interactions" value="289"/>
</dbReference>
<dbReference type="IntAct" id="Q04603">
    <property type="interactions" value="21"/>
</dbReference>
<dbReference type="MINT" id="Q04603"/>
<dbReference type="STRING" id="4932.YDR121W"/>
<dbReference type="iPTMnet" id="Q04603"/>
<dbReference type="PaxDb" id="4932-YDR121W"/>
<dbReference type="PeptideAtlas" id="Q04603"/>
<dbReference type="EnsemblFungi" id="YDR121W_mRNA">
    <property type="protein sequence ID" value="YDR121W"/>
    <property type="gene ID" value="YDR121W"/>
</dbReference>
<dbReference type="GeneID" id="851699"/>
<dbReference type="KEGG" id="sce:YDR121W"/>
<dbReference type="AGR" id="SGD:S000002528"/>
<dbReference type="SGD" id="S000002528">
    <property type="gene designation" value="DPB4"/>
</dbReference>
<dbReference type="VEuPathDB" id="FungiDB:YDR121W"/>
<dbReference type="eggNOG" id="KOG0870">
    <property type="taxonomic scope" value="Eukaryota"/>
</dbReference>
<dbReference type="HOGENOM" id="CLU_087036_1_0_1"/>
<dbReference type="InParanoid" id="Q04603"/>
<dbReference type="OMA" id="ALDHIGH"/>
<dbReference type="OrthoDB" id="1707486at2759"/>
<dbReference type="BioCyc" id="YEAST:G3O-29721-MONOMER"/>
<dbReference type="Reactome" id="R-SCE-5656169">
    <property type="pathway name" value="Termination of translesion DNA synthesis"/>
</dbReference>
<dbReference type="Reactome" id="R-SCE-6782135">
    <property type="pathway name" value="Dual incision in TC-NER"/>
</dbReference>
<dbReference type="Reactome" id="R-SCE-68952">
    <property type="pathway name" value="DNA replication initiation"/>
</dbReference>
<dbReference type="Reactome" id="R-SCE-68962">
    <property type="pathway name" value="Activation of the pre-replicative complex"/>
</dbReference>
<dbReference type="BioGRID-ORCS" id="851699">
    <property type="hits" value="0 hits in 10 CRISPR screens"/>
</dbReference>
<dbReference type="PRO" id="PR:Q04603"/>
<dbReference type="Proteomes" id="UP000002311">
    <property type="component" value="Chromosome IV"/>
</dbReference>
<dbReference type="RNAct" id="Q04603">
    <property type="molecule type" value="protein"/>
</dbReference>
<dbReference type="GO" id="GO:0008623">
    <property type="term" value="C:CHRAC"/>
    <property type="evidence" value="ECO:0000314"/>
    <property type="project" value="SGD"/>
</dbReference>
<dbReference type="GO" id="GO:0008622">
    <property type="term" value="C:epsilon DNA polymerase complex"/>
    <property type="evidence" value="ECO:0000314"/>
    <property type="project" value="SGD"/>
</dbReference>
<dbReference type="GO" id="GO:0043596">
    <property type="term" value="C:nuclear replication fork"/>
    <property type="evidence" value="ECO:0000314"/>
    <property type="project" value="ComplexPortal"/>
</dbReference>
<dbReference type="GO" id="GO:0005634">
    <property type="term" value="C:nucleus"/>
    <property type="evidence" value="ECO:0000303"/>
    <property type="project" value="ComplexPortal"/>
</dbReference>
<dbReference type="GO" id="GO:0031490">
    <property type="term" value="F:chromatin DNA binding"/>
    <property type="evidence" value="ECO:0000314"/>
    <property type="project" value="SGD"/>
</dbReference>
<dbReference type="GO" id="GO:0031492">
    <property type="term" value="F:nucleosomal DNA binding"/>
    <property type="evidence" value="ECO:0000314"/>
    <property type="project" value="SGD"/>
</dbReference>
<dbReference type="GO" id="GO:0046982">
    <property type="term" value="F:protein heterodimerization activity"/>
    <property type="evidence" value="ECO:0007669"/>
    <property type="project" value="InterPro"/>
</dbReference>
<dbReference type="GO" id="GO:0006338">
    <property type="term" value="P:chromatin remodeling"/>
    <property type="evidence" value="ECO:0000314"/>
    <property type="project" value="ComplexPortal"/>
</dbReference>
<dbReference type="GO" id="GO:0006974">
    <property type="term" value="P:DNA damage response"/>
    <property type="evidence" value="ECO:0000318"/>
    <property type="project" value="GO_Central"/>
</dbReference>
<dbReference type="GO" id="GO:0006261">
    <property type="term" value="P:DNA-templated DNA replication"/>
    <property type="evidence" value="ECO:0000314"/>
    <property type="project" value="SGD"/>
</dbReference>
<dbReference type="GO" id="GO:0042276">
    <property type="term" value="P:error-prone translesion synthesis"/>
    <property type="evidence" value="ECO:0000314"/>
    <property type="project" value="SGD"/>
</dbReference>
<dbReference type="GO" id="GO:0031507">
    <property type="term" value="P:heterochromatin formation"/>
    <property type="evidence" value="ECO:0000318"/>
    <property type="project" value="GO_Central"/>
</dbReference>
<dbReference type="GO" id="GO:0006272">
    <property type="term" value="P:leading strand elongation"/>
    <property type="evidence" value="ECO:0000315"/>
    <property type="project" value="SGD"/>
</dbReference>
<dbReference type="GO" id="GO:1903775">
    <property type="term" value="P:regulation of DNA double-strand break processing"/>
    <property type="evidence" value="ECO:0000315"/>
    <property type="project" value="SGD"/>
</dbReference>
<dbReference type="GO" id="GO:0006355">
    <property type="term" value="P:regulation of DNA-templated transcription"/>
    <property type="evidence" value="ECO:0000303"/>
    <property type="project" value="ComplexPortal"/>
</dbReference>
<dbReference type="CDD" id="cd22928">
    <property type="entry name" value="HFD_POLE3_DPB4"/>
    <property type="match status" value="1"/>
</dbReference>
<dbReference type="FunFam" id="1.10.20.10:FF:000142">
    <property type="entry name" value="DNA polymerase epsilon subunit D"/>
    <property type="match status" value="1"/>
</dbReference>
<dbReference type="Gene3D" id="1.10.20.10">
    <property type="entry name" value="Histone, subunit A"/>
    <property type="match status" value="1"/>
</dbReference>
<dbReference type="InterPro" id="IPR051377">
    <property type="entry name" value="DNA_Pol-Epsilon_Subunit"/>
</dbReference>
<dbReference type="InterPro" id="IPR009072">
    <property type="entry name" value="Histone-fold"/>
</dbReference>
<dbReference type="PANTHER" id="PTHR46172">
    <property type="entry name" value="DNA POLYMERASE EPSILON SUBUNIT 3"/>
    <property type="match status" value="1"/>
</dbReference>
<dbReference type="PANTHER" id="PTHR46172:SF1">
    <property type="entry name" value="DNA POLYMERASE EPSILON SUBUNIT 3"/>
    <property type="match status" value="1"/>
</dbReference>
<dbReference type="SUPFAM" id="SSF47113">
    <property type="entry name" value="Histone-fold"/>
    <property type="match status" value="1"/>
</dbReference>
<accession>Q04603</accession>
<accession>D6VSA7</accession>
<name>DPB4_YEAST</name>
<keyword id="KW-0002">3D-structure</keyword>
<keyword id="KW-0903">Direct protein sequencing</keyword>
<keyword id="KW-0235">DNA replication</keyword>
<keyword id="KW-0539">Nucleus</keyword>
<keyword id="KW-0597">Phosphoprotein</keyword>
<keyword id="KW-1185">Reference proteome</keyword>
<keyword id="KW-0804">Transcription</keyword>
<keyword id="KW-0805">Transcription regulation</keyword>
<reference key="1">
    <citation type="journal article" date="1997" name="Nature">
        <title>The nucleotide sequence of Saccharomyces cerevisiae chromosome IV.</title>
        <authorList>
            <person name="Jacq C."/>
            <person name="Alt-Moerbe J."/>
            <person name="Andre B."/>
            <person name="Arnold W."/>
            <person name="Bahr A."/>
            <person name="Ballesta J.P.G."/>
            <person name="Bargues M."/>
            <person name="Baron L."/>
            <person name="Becker A."/>
            <person name="Biteau N."/>
            <person name="Bloecker H."/>
            <person name="Blugeon C."/>
            <person name="Boskovic J."/>
            <person name="Brandt P."/>
            <person name="Brueckner M."/>
            <person name="Buitrago M.J."/>
            <person name="Coster F."/>
            <person name="Delaveau T."/>
            <person name="del Rey F."/>
            <person name="Dujon B."/>
            <person name="Eide L.G."/>
            <person name="Garcia-Cantalejo J.M."/>
            <person name="Goffeau A."/>
            <person name="Gomez-Peris A."/>
            <person name="Granotier C."/>
            <person name="Hanemann V."/>
            <person name="Hankeln T."/>
            <person name="Hoheisel J.D."/>
            <person name="Jaeger W."/>
            <person name="Jimenez A."/>
            <person name="Jonniaux J.-L."/>
            <person name="Kraemer C."/>
            <person name="Kuester H."/>
            <person name="Laamanen P."/>
            <person name="Legros Y."/>
            <person name="Louis E.J."/>
            <person name="Moeller-Rieker S."/>
            <person name="Monnet A."/>
            <person name="Moro M."/>
            <person name="Mueller-Auer S."/>
            <person name="Nussbaumer B."/>
            <person name="Paricio N."/>
            <person name="Paulin L."/>
            <person name="Perea J."/>
            <person name="Perez-Alonso M."/>
            <person name="Perez-Ortin J.E."/>
            <person name="Pohl T.M."/>
            <person name="Prydz H."/>
            <person name="Purnelle B."/>
            <person name="Rasmussen S.W."/>
            <person name="Remacha M.A."/>
            <person name="Revuelta J.L."/>
            <person name="Rieger M."/>
            <person name="Salom D."/>
            <person name="Saluz H.P."/>
            <person name="Saiz J.E."/>
            <person name="Saren A.-M."/>
            <person name="Schaefer M."/>
            <person name="Scharfe M."/>
            <person name="Schmidt E.R."/>
            <person name="Schneider C."/>
            <person name="Scholler P."/>
            <person name="Schwarz S."/>
            <person name="Soler-Mira A."/>
            <person name="Urrestarazu L.A."/>
            <person name="Verhasselt P."/>
            <person name="Vissers S."/>
            <person name="Voet M."/>
            <person name="Volckaert G."/>
            <person name="Wagner G."/>
            <person name="Wambutt R."/>
            <person name="Wedler E."/>
            <person name="Wedler H."/>
            <person name="Woelfl S."/>
            <person name="Harris D.E."/>
            <person name="Bowman S."/>
            <person name="Brown D."/>
            <person name="Churcher C.M."/>
            <person name="Connor R."/>
            <person name="Dedman K."/>
            <person name="Gentles S."/>
            <person name="Hamlin N."/>
            <person name="Hunt S."/>
            <person name="Jones L."/>
            <person name="McDonald S."/>
            <person name="Murphy L.D."/>
            <person name="Niblett D."/>
            <person name="Odell C."/>
            <person name="Oliver K."/>
            <person name="Rajandream M.A."/>
            <person name="Richards C."/>
            <person name="Shore L."/>
            <person name="Walsh S.V."/>
            <person name="Barrell B.G."/>
            <person name="Dietrich F.S."/>
            <person name="Mulligan J.T."/>
            <person name="Allen E."/>
            <person name="Araujo R."/>
            <person name="Aviles E."/>
            <person name="Berno A."/>
            <person name="Carpenter J."/>
            <person name="Chen E."/>
            <person name="Cherry J.M."/>
            <person name="Chung E."/>
            <person name="Duncan M."/>
            <person name="Hunicke-Smith S."/>
            <person name="Hyman R.W."/>
            <person name="Komp C."/>
            <person name="Lashkari D."/>
            <person name="Lew H."/>
            <person name="Lin D."/>
            <person name="Mosedale D."/>
            <person name="Nakahara K."/>
            <person name="Namath A."/>
            <person name="Oefner P."/>
            <person name="Oh C."/>
            <person name="Petel F.X."/>
            <person name="Roberts D."/>
            <person name="Schramm S."/>
            <person name="Schroeder M."/>
            <person name="Shogren T."/>
            <person name="Shroff N."/>
            <person name="Winant A."/>
            <person name="Yelton M.A."/>
            <person name="Botstein D."/>
            <person name="Davis R.W."/>
            <person name="Johnston M."/>
            <person name="Andrews S."/>
            <person name="Brinkman R."/>
            <person name="Cooper J."/>
            <person name="Ding H."/>
            <person name="Du Z."/>
            <person name="Favello A."/>
            <person name="Fulton L."/>
            <person name="Gattung S."/>
            <person name="Greco T."/>
            <person name="Hallsworth K."/>
            <person name="Hawkins J."/>
            <person name="Hillier L.W."/>
            <person name="Jier M."/>
            <person name="Johnson D."/>
            <person name="Johnston L."/>
            <person name="Kirsten J."/>
            <person name="Kucaba T."/>
            <person name="Langston Y."/>
            <person name="Latreille P."/>
            <person name="Le T."/>
            <person name="Mardis E."/>
            <person name="Menezes S."/>
            <person name="Miller N."/>
            <person name="Nhan M."/>
            <person name="Pauley A."/>
            <person name="Peluso D."/>
            <person name="Rifkin L."/>
            <person name="Riles L."/>
            <person name="Taich A."/>
            <person name="Trevaskis E."/>
            <person name="Vignati D."/>
            <person name="Wilcox L."/>
            <person name="Wohldman P."/>
            <person name="Vaudin M."/>
            <person name="Wilson R."/>
            <person name="Waterston R."/>
            <person name="Albermann K."/>
            <person name="Hani J."/>
            <person name="Heumann K."/>
            <person name="Kleine K."/>
            <person name="Mewes H.-W."/>
            <person name="Zollner A."/>
            <person name="Zaccaria P."/>
        </authorList>
    </citation>
    <scope>NUCLEOTIDE SEQUENCE [LARGE SCALE GENOMIC DNA]</scope>
    <source>
        <strain>ATCC 204508 / S288c</strain>
    </source>
</reference>
<reference key="2">
    <citation type="journal article" date="2014" name="G3 (Bethesda)">
        <title>The reference genome sequence of Saccharomyces cerevisiae: Then and now.</title>
        <authorList>
            <person name="Engel S.R."/>
            <person name="Dietrich F.S."/>
            <person name="Fisk D.G."/>
            <person name="Binkley G."/>
            <person name="Balakrishnan R."/>
            <person name="Costanzo M.C."/>
            <person name="Dwight S.S."/>
            <person name="Hitz B.C."/>
            <person name="Karra K."/>
            <person name="Nash R.S."/>
            <person name="Weng S."/>
            <person name="Wong E.D."/>
            <person name="Lloyd P."/>
            <person name="Skrzypek M.S."/>
            <person name="Miyasato S.R."/>
            <person name="Simison M."/>
            <person name="Cherry J.M."/>
        </authorList>
    </citation>
    <scope>GENOME REANNOTATION</scope>
    <source>
        <strain>ATCC 204508 / S288c</strain>
    </source>
</reference>
<reference key="3">
    <citation type="journal article" date="2007" name="Genome Res.">
        <title>Approaching a complete repository of sequence-verified protein-encoding clones for Saccharomyces cerevisiae.</title>
        <authorList>
            <person name="Hu Y."/>
            <person name="Rolfs A."/>
            <person name="Bhullar B."/>
            <person name="Murthy T.V.S."/>
            <person name="Zhu C."/>
            <person name="Berger M.F."/>
            <person name="Camargo A.A."/>
            <person name="Kelley F."/>
            <person name="McCarron S."/>
            <person name="Jepson D."/>
            <person name="Richardson A."/>
            <person name="Raphael J."/>
            <person name="Moreira D."/>
            <person name="Taycher E."/>
            <person name="Zuo D."/>
            <person name="Mohr S."/>
            <person name="Kane M.F."/>
            <person name="Williamson J."/>
            <person name="Simpson A.J.G."/>
            <person name="Bulyk M.L."/>
            <person name="Harlow E."/>
            <person name="Marsischky G."/>
            <person name="Kolodner R.D."/>
            <person name="LaBaer J."/>
        </authorList>
    </citation>
    <scope>NUCLEOTIDE SEQUENCE [GENOMIC DNA]</scope>
    <source>
        <strain>ATCC 204508 / S288c</strain>
    </source>
</reference>
<reference key="4">
    <citation type="journal article" date="2000" name="Nucleic Acids Res.">
        <title>Structure and function of the fourth subunit (Dpb4p) of DNA polymerase epsilon in Saccharomyces cerevisiae.</title>
        <authorList>
            <person name="Ohya T."/>
            <person name="Maki S."/>
            <person name="Kawasaki Y."/>
            <person name="Sugino A."/>
        </authorList>
    </citation>
    <scope>PROTEIN SEQUENCE OF 115-125 AND 157-176</scope>
    <scope>FUNCTION</scope>
    <scope>SUBUNIT</scope>
    <scope>SUBCELLULAR LOCATION</scope>
</reference>
<reference key="5">
    <citation type="journal article" date="2000" name="Cell">
        <title>The Isw2 chromatin remodeling complex represses early meiotic genes upon recruitment by Ume6p.</title>
        <authorList>
            <person name="Goldmark J.P."/>
            <person name="Fazzio T.G."/>
            <person name="Estep P.W."/>
            <person name="Church G.M."/>
            <person name="Tsukiyama T."/>
        </authorList>
    </citation>
    <scope>FUNCTION OF THE ISW2 COMPLEX</scope>
</reference>
<reference key="6">
    <citation type="journal article" date="2001" name="Mol. Cell. Biol.">
        <title>Interactions of Isw2 chromatin remodeling complex with nucleosomal arrays: analyses using recombinant yeast histones and immobilized templates.</title>
        <authorList>
            <person name="Gelbart M.E."/>
            <person name="Rechsteiner T."/>
            <person name="Richmond T.J."/>
            <person name="Tsukiyama T."/>
        </authorList>
    </citation>
    <scope>FUNCTION OF THE ISW2 COMPLEX</scope>
</reference>
<reference key="7">
    <citation type="journal article" date="2001" name="Mol. Cell. Biol.">
        <title>Widespread collaboration of Isw2 and Sin3-Rpd3 chromatin remodeling complexes in transcriptional repression.</title>
        <authorList>
            <person name="Fazzio T.G."/>
            <person name="Kooperberg C."/>
            <person name="Goldmark J.P."/>
            <person name="Neal C."/>
            <person name="Basom R."/>
            <person name="Delrow J."/>
            <person name="Tsukiyama T."/>
        </authorList>
    </citation>
    <scope>FUNCTION OF THE ISW2 COMPLEX</scope>
</reference>
<reference key="8">
    <citation type="journal article" date="2002" name="J. Biol. Chem.">
        <title>Fidelity of DNA polymerase epsilon holoenzyme from budding yeast Saccharomyces cerevisiae.</title>
        <authorList>
            <person name="Shimizu K."/>
            <person name="Hashimoto K."/>
            <person name="Kirchner J.M."/>
            <person name="Nakai W."/>
            <person name="Nishikawa H."/>
            <person name="Resnick M.A."/>
            <person name="Sugino A."/>
        </authorList>
    </citation>
    <scope>FUNCTION</scope>
</reference>
<reference key="9">
    <citation type="journal article" date="2003" name="J. Biol. Chem.">
        <title>The quaternary structure of DNA polymerase epsilon from Saccharomyces cerevisiae.</title>
        <authorList>
            <person name="Chilkova O."/>
            <person name="Jonsson B.-H."/>
            <person name="Johansson E."/>
        </authorList>
    </citation>
    <scope>COMPOSITION OF THE DNA POLYMERASE EPSILON COMPLEX</scope>
</reference>
<reference key="10">
    <citation type="journal article" date="2003" name="Nature">
        <title>Global analysis of protein expression in yeast.</title>
        <authorList>
            <person name="Ghaemmaghami S."/>
            <person name="Huh W.-K."/>
            <person name="Bower K."/>
            <person name="Howson R.W."/>
            <person name="Belle A."/>
            <person name="Dephoure N."/>
            <person name="O'Shea E.K."/>
            <person name="Weissman J.S."/>
        </authorList>
    </citation>
    <scope>LEVEL OF PROTEIN EXPRESSION [LARGE SCALE ANALYSIS]</scope>
</reference>
<reference key="11">
    <citation type="journal article" date="2004" name="Mol. Cell. Biol.">
        <title>Noncompetitive counteractions of DNA polymerase epsilon and ISW2/yCHRAC for epigenetic inheritance of telomere position effect in Saccharomyces cerevisiae.</title>
        <authorList>
            <person name="Iida T."/>
            <person name="Araki H."/>
        </authorList>
    </citation>
    <scope>IDENTIFICATION IN THE ISW2 COMPLEX</scope>
    <scope>FUNCTION OF THE ISW2 COMPLEX</scope>
</reference>
<reference key="12">
    <citation type="journal article" date="2004" name="Mol. Cell. Biol.">
        <title>Histone fold protein Dls1p is required for Isw2-dependent chromatin remodeling in vivo.</title>
        <authorList>
            <person name="McConnell A.D."/>
            <person name="Gelbart M.E."/>
            <person name="Tsukiyama T."/>
        </authorList>
    </citation>
    <scope>IDENTIFICATION IN THE ISW2 COMPLEX</scope>
</reference>
<reference key="13">
    <citation type="journal article" date="2008" name="Mol. Cell. Proteomics">
        <title>A multidimensional chromatography technology for in-depth phosphoproteome analysis.</title>
        <authorList>
            <person name="Albuquerque C.P."/>
            <person name="Smolka M.B."/>
            <person name="Payne S.H."/>
            <person name="Bafna V."/>
            <person name="Eng J."/>
            <person name="Zhou H."/>
        </authorList>
    </citation>
    <scope>PHOSPHORYLATION [LARGE SCALE ANALYSIS] AT SER-183</scope>
    <scope>IDENTIFICATION BY MASS SPECTROMETRY [LARGE SCALE ANALYSIS]</scope>
</reference>